<comment type="function">
    <text evidence="1">Cell wall formation. Catalyzes the addition of glutamate to the nucleotide precursor UDP-N-acetylmuramoyl-L-alanine (UMA).</text>
</comment>
<comment type="catalytic activity">
    <reaction>
        <text>UDP-N-acetyl-alpha-D-muramoyl-L-alanine + D-glutamate + ATP = UDP-N-acetyl-alpha-D-muramoyl-L-alanyl-D-glutamate + ADP + phosphate + H(+)</text>
        <dbReference type="Rhea" id="RHEA:16429"/>
        <dbReference type="ChEBI" id="CHEBI:15378"/>
        <dbReference type="ChEBI" id="CHEBI:29986"/>
        <dbReference type="ChEBI" id="CHEBI:30616"/>
        <dbReference type="ChEBI" id="CHEBI:43474"/>
        <dbReference type="ChEBI" id="CHEBI:83898"/>
        <dbReference type="ChEBI" id="CHEBI:83900"/>
        <dbReference type="ChEBI" id="CHEBI:456216"/>
        <dbReference type="EC" id="6.3.2.9"/>
    </reaction>
</comment>
<comment type="pathway">
    <text>Cell wall biogenesis; peptidoglycan biosynthesis.</text>
</comment>
<comment type="subcellular location">
    <subcellularLocation>
        <location evidence="1">Cytoplasm</location>
    </subcellularLocation>
</comment>
<comment type="similarity">
    <text evidence="3">Belongs to the MurCDEF family.</text>
</comment>
<comment type="sequence caution" evidence="3">
    <conflict type="frameshift">
        <sequence resource="EMBL-CDS" id="AAA66472"/>
    </conflict>
</comment>
<dbReference type="EC" id="6.3.2.9"/>
<dbReference type="EMBL" id="AL591688">
    <property type="protein sequence ID" value="CAC46757.1"/>
    <property type="molecule type" value="Genomic_DNA"/>
</dbReference>
<dbReference type="EMBL" id="L25875">
    <property type="protein sequence ID" value="AAA66472.1"/>
    <property type="status" value="ALT_FRAME"/>
    <property type="molecule type" value="Genomic_DNA"/>
</dbReference>
<dbReference type="PIR" id="JC2567">
    <property type="entry name" value="JC2567"/>
</dbReference>
<dbReference type="RefSeq" id="NP_386284.1">
    <property type="nucleotide sequence ID" value="NC_003047.1"/>
</dbReference>
<dbReference type="RefSeq" id="WP_010969748.1">
    <property type="nucleotide sequence ID" value="NC_003047.1"/>
</dbReference>
<dbReference type="SMR" id="Q52953"/>
<dbReference type="EnsemblBacteria" id="CAC46757">
    <property type="protein sequence ID" value="CAC46757"/>
    <property type="gene ID" value="SMc01864"/>
</dbReference>
<dbReference type="KEGG" id="sme:SMc01864"/>
<dbReference type="PATRIC" id="fig|266834.11.peg.3644"/>
<dbReference type="eggNOG" id="COG0771">
    <property type="taxonomic scope" value="Bacteria"/>
</dbReference>
<dbReference type="HOGENOM" id="CLU_032540_3_0_5"/>
<dbReference type="OrthoDB" id="9809796at2"/>
<dbReference type="UniPathway" id="UPA00219"/>
<dbReference type="Proteomes" id="UP000001976">
    <property type="component" value="Chromosome"/>
</dbReference>
<dbReference type="GO" id="GO:0005737">
    <property type="term" value="C:cytoplasm"/>
    <property type="evidence" value="ECO:0007669"/>
    <property type="project" value="UniProtKB-SubCell"/>
</dbReference>
<dbReference type="GO" id="GO:0005524">
    <property type="term" value="F:ATP binding"/>
    <property type="evidence" value="ECO:0007669"/>
    <property type="project" value="UniProtKB-UniRule"/>
</dbReference>
<dbReference type="GO" id="GO:0004326">
    <property type="term" value="F:tetrahydrofolylpolyglutamate synthase activity"/>
    <property type="evidence" value="ECO:0007669"/>
    <property type="project" value="InterPro"/>
</dbReference>
<dbReference type="GO" id="GO:0008764">
    <property type="term" value="F:UDP-N-acetylmuramoylalanine-D-glutamate ligase activity"/>
    <property type="evidence" value="ECO:0007669"/>
    <property type="project" value="UniProtKB-UniRule"/>
</dbReference>
<dbReference type="GO" id="GO:0051301">
    <property type="term" value="P:cell division"/>
    <property type="evidence" value="ECO:0007669"/>
    <property type="project" value="UniProtKB-KW"/>
</dbReference>
<dbReference type="GO" id="GO:0071555">
    <property type="term" value="P:cell wall organization"/>
    <property type="evidence" value="ECO:0007669"/>
    <property type="project" value="UniProtKB-KW"/>
</dbReference>
<dbReference type="GO" id="GO:0009252">
    <property type="term" value="P:peptidoglycan biosynthetic process"/>
    <property type="evidence" value="ECO:0007669"/>
    <property type="project" value="UniProtKB-UniRule"/>
</dbReference>
<dbReference type="GO" id="GO:0008360">
    <property type="term" value="P:regulation of cell shape"/>
    <property type="evidence" value="ECO:0007669"/>
    <property type="project" value="UniProtKB-KW"/>
</dbReference>
<dbReference type="Gene3D" id="3.90.190.20">
    <property type="entry name" value="Mur ligase, C-terminal domain"/>
    <property type="match status" value="1"/>
</dbReference>
<dbReference type="Gene3D" id="3.40.1190.10">
    <property type="entry name" value="Mur-like, catalytic domain"/>
    <property type="match status" value="1"/>
</dbReference>
<dbReference type="Gene3D" id="3.40.50.720">
    <property type="entry name" value="NAD(P)-binding Rossmann-like Domain"/>
    <property type="match status" value="1"/>
</dbReference>
<dbReference type="HAMAP" id="MF_00639">
    <property type="entry name" value="MurD"/>
    <property type="match status" value="1"/>
</dbReference>
<dbReference type="InterPro" id="IPR018109">
    <property type="entry name" value="Folylpolyglutamate_synth_CS"/>
</dbReference>
<dbReference type="InterPro" id="IPR036565">
    <property type="entry name" value="Mur-like_cat_sf"/>
</dbReference>
<dbReference type="InterPro" id="IPR004101">
    <property type="entry name" value="Mur_ligase_C"/>
</dbReference>
<dbReference type="InterPro" id="IPR036615">
    <property type="entry name" value="Mur_ligase_C_dom_sf"/>
</dbReference>
<dbReference type="InterPro" id="IPR013221">
    <property type="entry name" value="Mur_ligase_cen"/>
</dbReference>
<dbReference type="InterPro" id="IPR005762">
    <property type="entry name" value="MurD"/>
</dbReference>
<dbReference type="NCBIfam" id="TIGR01087">
    <property type="entry name" value="murD"/>
    <property type="match status" value="1"/>
</dbReference>
<dbReference type="PANTHER" id="PTHR43692">
    <property type="entry name" value="UDP-N-ACETYLMURAMOYLALANINE--D-GLUTAMATE LIGASE"/>
    <property type="match status" value="1"/>
</dbReference>
<dbReference type="PANTHER" id="PTHR43692:SF1">
    <property type="entry name" value="UDP-N-ACETYLMURAMOYLALANINE--D-GLUTAMATE LIGASE"/>
    <property type="match status" value="1"/>
</dbReference>
<dbReference type="Pfam" id="PF02875">
    <property type="entry name" value="Mur_ligase_C"/>
    <property type="match status" value="1"/>
</dbReference>
<dbReference type="Pfam" id="PF08245">
    <property type="entry name" value="Mur_ligase_M"/>
    <property type="match status" value="1"/>
</dbReference>
<dbReference type="SUPFAM" id="SSF51984">
    <property type="entry name" value="MurCD N-terminal domain"/>
    <property type="match status" value="1"/>
</dbReference>
<dbReference type="SUPFAM" id="SSF53623">
    <property type="entry name" value="MurD-like peptide ligases, catalytic domain"/>
    <property type="match status" value="1"/>
</dbReference>
<dbReference type="SUPFAM" id="SSF53244">
    <property type="entry name" value="MurD-like peptide ligases, peptide-binding domain"/>
    <property type="match status" value="1"/>
</dbReference>
<organism>
    <name type="scientific">Rhizobium meliloti (strain 1021)</name>
    <name type="common">Ensifer meliloti</name>
    <name type="synonym">Sinorhizobium meliloti</name>
    <dbReference type="NCBI Taxonomy" id="266834"/>
    <lineage>
        <taxon>Bacteria</taxon>
        <taxon>Pseudomonadati</taxon>
        <taxon>Pseudomonadota</taxon>
        <taxon>Alphaproteobacteria</taxon>
        <taxon>Hyphomicrobiales</taxon>
        <taxon>Rhizobiaceae</taxon>
        <taxon>Sinorhizobium/Ensifer group</taxon>
        <taxon>Sinorhizobium</taxon>
    </lineage>
</organism>
<proteinExistence type="inferred from homology"/>
<evidence type="ECO:0000250" key="1"/>
<evidence type="ECO:0000255" key="2"/>
<evidence type="ECO:0000305" key="3"/>
<gene>
    <name type="primary">murD</name>
    <name type="ordered locus">R02178</name>
    <name type="ORF">SMc01864</name>
</gene>
<sequence length="463" mass="48067">MIPVTSFKGRKVALFGLGGSGLATAQALVSGGADVVAWDDNPDSVAKAAAAGIATADLRGADWHAFAAFVLSPGVPLTHPKPHWSVDLAHQAGVEIIGDVELFVRERRKHAPDCPFIAITGTNGKSTTTALIAHILRTSGRDTQLGGNIGTAVLTLDPPKAGRFYVVECSSYQIDLAPTLDPTAGILLNLTPDHLDRHGTMQHYADIKERLVAGSGTAVVGVDDSLSSLIADRVERAGTKVVRISRRHPLAEGIYAEGSALMRAQDGASSLFTDLAGIQTLRGGHNAQNAAAAIAACLAVGISGKDIVDGLRSFPGLKHRMQPVAKKGEVVFVNDSKATNAEAAAPALSSYDRIYWIAGGLPKEGGITSLAPFFPKIVKAYLIGEAAPSFAATLGEAVPYEISGTLEKAVAHAAADAARDSQGPAAVMLSPACASFDQYKNFEVRGDAFVGHVAALEGVSMLI</sequence>
<protein>
    <recommendedName>
        <fullName>UDP-N-acetylmuramoylalanine--D-glutamate ligase</fullName>
        <ecNumber>6.3.2.9</ecNumber>
    </recommendedName>
    <alternativeName>
        <fullName>D-glutamic acid-adding enzyme</fullName>
    </alternativeName>
    <alternativeName>
        <fullName>UDP-N-acetylmuramoyl-L-alanyl-D-glutamate synthetase</fullName>
    </alternativeName>
</protein>
<accession>Q52953</accession>
<reference key="1">
    <citation type="journal article" date="2001" name="Proc. Natl. Acad. Sci. U.S.A.">
        <title>Analysis of the chromosome sequence of the legume symbiont Sinorhizobium meliloti strain 1021.</title>
        <authorList>
            <person name="Capela D."/>
            <person name="Barloy-Hubler F."/>
            <person name="Gouzy J."/>
            <person name="Bothe G."/>
            <person name="Ampe F."/>
            <person name="Batut J."/>
            <person name="Boistard P."/>
            <person name="Becker A."/>
            <person name="Boutry M."/>
            <person name="Cadieu E."/>
            <person name="Dreano S."/>
            <person name="Gloux S."/>
            <person name="Godrie T."/>
            <person name="Goffeau A."/>
            <person name="Kahn D."/>
            <person name="Kiss E."/>
            <person name="Lelaure V."/>
            <person name="Masuy D."/>
            <person name="Pohl T."/>
            <person name="Portetelle D."/>
            <person name="Puehler A."/>
            <person name="Purnelle B."/>
            <person name="Ramsperger U."/>
            <person name="Renard C."/>
            <person name="Thebault P."/>
            <person name="Vandenbol M."/>
            <person name="Weidner S."/>
            <person name="Galibert F."/>
        </authorList>
    </citation>
    <scope>NUCLEOTIDE SEQUENCE [LARGE SCALE GENOMIC DNA]</scope>
    <source>
        <strain>1021</strain>
    </source>
</reference>
<reference key="2">
    <citation type="journal article" date="2001" name="Science">
        <title>The composite genome of the legume symbiont Sinorhizobium meliloti.</title>
        <authorList>
            <person name="Galibert F."/>
            <person name="Finan T.M."/>
            <person name="Long S.R."/>
            <person name="Puehler A."/>
            <person name="Abola P."/>
            <person name="Ampe F."/>
            <person name="Barloy-Hubler F."/>
            <person name="Barnett M.J."/>
            <person name="Becker A."/>
            <person name="Boistard P."/>
            <person name="Bothe G."/>
            <person name="Boutry M."/>
            <person name="Bowser L."/>
            <person name="Buhrmester J."/>
            <person name="Cadieu E."/>
            <person name="Capela D."/>
            <person name="Chain P."/>
            <person name="Cowie A."/>
            <person name="Davis R.W."/>
            <person name="Dreano S."/>
            <person name="Federspiel N.A."/>
            <person name="Fisher R.F."/>
            <person name="Gloux S."/>
            <person name="Godrie T."/>
            <person name="Goffeau A."/>
            <person name="Golding B."/>
            <person name="Gouzy J."/>
            <person name="Gurjal M."/>
            <person name="Hernandez-Lucas I."/>
            <person name="Hong A."/>
            <person name="Huizar L."/>
            <person name="Hyman R.W."/>
            <person name="Jones T."/>
            <person name="Kahn D."/>
            <person name="Kahn M.L."/>
            <person name="Kalman S."/>
            <person name="Keating D.H."/>
            <person name="Kiss E."/>
            <person name="Komp C."/>
            <person name="Lelaure V."/>
            <person name="Masuy D."/>
            <person name="Palm C."/>
            <person name="Peck M.C."/>
            <person name="Pohl T.M."/>
            <person name="Portetelle D."/>
            <person name="Purnelle B."/>
            <person name="Ramsperger U."/>
            <person name="Surzycki R."/>
            <person name="Thebault P."/>
            <person name="Vandenbol M."/>
            <person name="Vorhoelter F.J."/>
            <person name="Weidner S."/>
            <person name="Wells D.H."/>
            <person name="Wong K."/>
            <person name="Yeh K.-C."/>
            <person name="Batut J."/>
        </authorList>
    </citation>
    <scope>NUCLEOTIDE SEQUENCE [LARGE SCALE GENOMIC DNA]</scope>
    <source>
        <strain>1021</strain>
    </source>
</reference>
<reference key="3">
    <citation type="journal article" date="1994" name="Gene">
        <title>Rhizobium meliloti homologs of Escherichia coli mur genes.</title>
        <authorList>
            <person name="Leach F."/>
            <person name="Wacks D.B."/>
            <person name="Signer E.R."/>
        </authorList>
    </citation>
    <scope>PRELIMINARY NUCLEOTIDE SEQUENCE [GENOMIC DNA] OF 1-344</scope>
    <source>
        <strain>1021</strain>
    </source>
</reference>
<name>MURD_RHIME</name>
<feature type="chain" id="PRO_0000109069" description="UDP-N-acetylmuramoylalanine--D-glutamate ligase">
    <location>
        <begin position="1"/>
        <end position="463"/>
    </location>
</feature>
<feature type="binding site" evidence="2">
    <location>
        <begin position="121"/>
        <end position="127"/>
    </location>
    <ligand>
        <name>ATP</name>
        <dbReference type="ChEBI" id="CHEBI:30616"/>
    </ligand>
</feature>
<feature type="sequence conflict" description="In Ref. 3; AAA66472." evidence="3" ref="3">
    <original>I</original>
    <variation>V</variation>
    <location>
        <position position="132"/>
    </location>
</feature>
<feature type="sequence conflict" description="In Ref. 3; AAA66472." evidence="3" ref="3">
    <original>R</original>
    <variation>S</variation>
    <location>
        <position position="243"/>
    </location>
</feature>
<keyword id="KW-0067">ATP-binding</keyword>
<keyword id="KW-0131">Cell cycle</keyword>
<keyword id="KW-0132">Cell division</keyword>
<keyword id="KW-0133">Cell shape</keyword>
<keyword id="KW-0961">Cell wall biogenesis/degradation</keyword>
<keyword id="KW-0963">Cytoplasm</keyword>
<keyword id="KW-0436">Ligase</keyword>
<keyword id="KW-0547">Nucleotide-binding</keyword>
<keyword id="KW-0573">Peptidoglycan synthesis</keyword>
<keyword id="KW-1185">Reference proteome</keyword>